<sequence>MSFVVVIPARYQSSRLPGKPLADIHGKPMIAWVVERAKQAGASQVIVAVDDERVAAAVSALGVDVCMTGSHHQSGTERLAEVCEKYAFAPDTIIVNVQGDEPLIPPAIITQVADNLANTSAPMATLAVAIEDEHELFNPNAVKVVMDKQGYALYFSRATIPWDRDGFAQQPKQWRHTFLRHIGIYAYRAGFIRQYVSWPVSPLEQIESLEQLRVLWHSEKIHVAVAAENPPAGVDTAEDLEKVRRFLGNIKSEK</sequence>
<reference key="1">
    <citation type="submission" date="2009-05" db="EMBL/GenBank/DDBJ databases">
        <title>Complete sequence of Tolumonas auensis DSM 9187.</title>
        <authorList>
            <consortium name="US DOE Joint Genome Institute"/>
            <person name="Lucas S."/>
            <person name="Copeland A."/>
            <person name="Lapidus A."/>
            <person name="Glavina del Rio T."/>
            <person name="Tice H."/>
            <person name="Bruce D."/>
            <person name="Goodwin L."/>
            <person name="Pitluck S."/>
            <person name="Chertkov O."/>
            <person name="Brettin T."/>
            <person name="Detter J.C."/>
            <person name="Han C."/>
            <person name="Larimer F."/>
            <person name="Land M."/>
            <person name="Hauser L."/>
            <person name="Kyrpides N."/>
            <person name="Mikhailova N."/>
            <person name="Spring S."/>
            <person name="Beller H."/>
        </authorList>
    </citation>
    <scope>NUCLEOTIDE SEQUENCE [LARGE SCALE GENOMIC DNA]</scope>
    <source>
        <strain>DSM 9187 / NBRC 110442 / TA 4</strain>
    </source>
</reference>
<keyword id="KW-0963">Cytoplasm</keyword>
<keyword id="KW-0448">Lipopolysaccharide biosynthesis</keyword>
<keyword id="KW-0548">Nucleotidyltransferase</keyword>
<keyword id="KW-1185">Reference proteome</keyword>
<keyword id="KW-0808">Transferase</keyword>
<accession>C4L8W0</accession>
<protein>
    <recommendedName>
        <fullName evidence="1">3-deoxy-manno-octulosonate cytidylyltransferase</fullName>
        <ecNumber evidence="1">2.7.7.38</ecNumber>
    </recommendedName>
    <alternativeName>
        <fullName evidence="1">CMP-2-keto-3-deoxyoctulosonic acid synthase</fullName>
        <shortName evidence="1">CKS</shortName>
        <shortName evidence="1">CMP-KDO synthase</shortName>
    </alternativeName>
</protein>
<name>KDSB_TOLAT</name>
<proteinExistence type="inferred from homology"/>
<evidence type="ECO:0000255" key="1">
    <source>
        <dbReference type="HAMAP-Rule" id="MF_00057"/>
    </source>
</evidence>
<dbReference type="EC" id="2.7.7.38" evidence="1"/>
<dbReference type="EMBL" id="CP001616">
    <property type="protein sequence ID" value="ACQ93830.1"/>
    <property type="molecule type" value="Genomic_DNA"/>
</dbReference>
<dbReference type="RefSeq" id="WP_015879298.1">
    <property type="nucleotide sequence ID" value="NC_012691.1"/>
</dbReference>
<dbReference type="SMR" id="C4L8W0"/>
<dbReference type="STRING" id="595494.Tola_2232"/>
<dbReference type="KEGG" id="tau:Tola_2232"/>
<dbReference type="eggNOG" id="COG1212">
    <property type="taxonomic scope" value="Bacteria"/>
</dbReference>
<dbReference type="HOGENOM" id="CLU_065038_1_0_6"/>
<dbReference type="OrthoDB" id="9815559at2"/>
<dbReference type="UniPathway" id="UPA00030"/>
<dbReference type="UniPathway" id="UPA00358">
    <property type="reaction ID" value="UER00476"/>
</dbReference>
<dbReference type="Proteomes" id="UP000009073">
    <property type="component" value="Chromosome"/>
</dbReference>
<dbReference type="GO" id="GO:0005829">
    <property type="term" value="C:cytosol"/>
    <property type="evidence" value="ECO:0007669"/>
    <property type="project" value="TreeGrafter"/>
</dbReference>
<dbReference type="GO" id="GO:0008690">
    <property type="term" value="F:3-deoxy-manno-octulosonate cytidylyltransferase activity"/>
    <property type="evidence" value="ECO:0007669"/>
    <property type="project" value="UniProtKB-UniRule"/>
</dbReference>
<dbReference type="GO" id="GO:0033468">
    <property type="term" value="P:CMP-keto-3-deoxy-D-manno-octulosonic acid biosynthetic process"/>
    <property type="evidence" value="ECO:0007669"/>
    <property type="project" value="UniProtKB-UniRule"/>
</dbReference>
<dbReference type="GO" id="GO:0009103">
    <property type="term" value="P:lipopolysaccharide biosynthetic process"/>
    <property type="evidence" value="ECO:0007669"/>
    <property type="project" value="UniProtKB-UniRule"/>
</dbReference>
<dbReference type="CDD" id="cd02517">
    <property type="entry name" value="CMP-KDO-Synthetase"/>
    <property type="match status" value="1"/>
</dbReference>
<dbReference type="FunFam" id="3.90.550.10:FF:000011">
    <property type="entry name" value="3-deoxy-manno-octulosonate cytidylyltransferase"/>
    <property type="match status" value="1"/>
</dbReference>
<dbReference type="Gene3D" id="3.90.550.10">
    <property type="entry name" value="Spore Coat Polysaccharide Biosynthesis Protein SpsA, Chain A"/>
    <property type="match status" value="1"/>
</dbReference>
<dbReference type="HAMAP" id="MF_00057">
    <property type="entry name" value="KdsB"/>
    <property type="match status" value="1"/>
</dbReference>
<dbReference type="InterPro" id="IPR003329">
    <property type="entry name" value="Cytidylyl_trans"/>
</dbReference>
<dbReference type="InterPro" id="IPR004528">
    <property type="entry name" value="KdsB"/>
</dbReference>
<dbReference type="InterPro" id="IPR029044">
    <property type="entry name" value="Nucleotide-diphossugar_trans"/>
</dbReference>
<dbReference type="NCBIfam" id="TIGR00466">
    <property type="entry name" value="kdsB"/>
    <property type="match status" value="1"/>
</dbReference>
<dbReference type="NCBIfam" id="NF003950">
    <property type="entry name" value="PRK05450.1-3"/>
    <property type="match status" value="1"/>
</dbReference>
<dbReference type="NCBIfam" id="NF003952">
    <property type="entry name" value="PRK05450.1-5"/>
    <property type="match status" value="1"/>
</dbReference>
<dbReference type="NCBIfam" id="NF009905">
    <property type="entry name" value="PRK13368.1"/>
    <property type="match status" value="1"/>
</dbReference>
<dbReference type="PANTHER" id="PTHR42866">
    <property type="entry name" value="3-DEOXY-MANNO-OCTULOSONATE CYTIDYLYLTRANSFERASE"/>
    <property type="match status" value="1"/>
</dbReference>
<dbReference type="PANTHER" id="PTHR42866:SF2">
    <property type="entry name" value="3-DEOXY-MANNO-OCTULOSONATE CYTIDYLYLTRANSFERASE, MITOCHONDRIAL"/>
    <property type="match status" value="1"/>
</dbReference>
<dbReference type="Pfam" id="PF02348">
    <property type="entry name" value="CTP_transf_3"/>
    <property type="match status" value="1"/>
</dbReference>
<dbReference type="SUPFAM" id="SSF53448">
    <property type="entry name" value="Nucleotide-diphospho-sugar transferases"/>
    <property type="match status" value="1"/>
</dbReference>
<comment type="function">
    <text evidence="1">Activates KDO (a required 8-carbon sugar) for incorporation into bacterial lipopolysaccharide in Gram-negative bacteria.</text>
</comment>
<comment type="catalytic activity">
    <reaction evidence="1">
        <text>3-deoxy-alpha-D-manno-oct-2-ulosonate + CTP = CMP-3-deoxy-beta-D-manno-octulosonate + diphosphate</text>
        <dbReference type="Rhea" id="RHEA:23448"/>
        <dbReference type="ChEBI" id="CHEBI:33019"/>
        <dbReference type="ChEBI" id="CHEBI:37563"/>
        <dbReference type="ChEBI" id="CHEBI:85986"/>
        <dbReference type="ChEBI" id="CHEBI:85987"/>
        <dbReference type="EC" id="2.7.7.38"/>
    </reaction>
</comment>
<comment type="pathway">
    <text evidence="1">Nucleotide-sugar biosynthesis; CMP-3-deoxy-D-manno-octulosonate biosynthesis; CMP-3-deoxy-D-manno-octulosonate from 3-deoxy-D-manno-octulosonate and CTP: step 1/1.</text>
</comment>
<comment type="pathway">
    <text evidence="1">Bacterial outer membrane biogenesis; lipopolysaccharide biosynthesis.</text>
</comment>
<comment type="subcellular location">
    <subcellularLocation>
        <location evidence="1">Cytoplasm</location>
    </subcellularLocation>
</comment>
<comment type="similarity">
    <text evidence="1">Belongs to the KdsB family.</text>
</comment>
<gene>
    <name evidence="1" type="primary">kdsB</name>
    <name type="ordered locus">Tola_2232</name>
</gene>
<feature type="chain" id="PRO_1000202349" description="3-deoxy-manno-octulosonate cytidylyltransferase">
    <location>
        <begin position="1"/>
        <end position="254"/>
    </location>
</feature>
<organism>
    <name type="scientific">Tolumonas auensis (strain DSM 9187 / NBRC 110442 / TA 4)</name>
    <dbReference type="NCBI Taxonomy" id="595494"/>
    <lineage>
        <taxon>Bacteria</taxon>
        <taxon>Pseudomonadati</taxon>
        <taxon>Pseudomonadota</taxon>
        <taxon>Gammaproteobacteria</taxon>
        <taxon>Aeromonadales</taxon>
        <taxon>Aeromonadaceae</taxon>
        <taxon>Tolumonas</taxon>
    </lineage>
</organism>